<accession>B3GZ78</accession>
<evidence type="ECO:0000255" key="1">
    <source>
        <dbReference type="HAMAP-Rule" id="MF_00366"/>
    </source>
</evidence>
<organism>
    <name type="scientific">Actinobacillus pleuropneumoniae serotype 7 (strain AP76)</name>
    <dbReference type="NCBI Taxonomy" id="537457"/>
    <lineage>
        <taxon>Bacteria</taxon>
        <taxon>Pseudomonadati</taxon>
        <taxon>Pseudomonadota</taxon>
        <taxon>Gammaproteobacteria</taxon>
        <taxon>Pasteurellales</taxon>
        <taxon>Pasteurellaceae</taxon>
        <taxon>Actinobacillus</taxon>
    </lineage>
</organism>
<gene>
    <name evidence="1" type="primary">rpoZ</name>
    <name type="ordered locus">APP7_1912</name>
</gene>
<comment type="function">
    <text evidence="1">Promotes RNA polymerase assembly. Latches the N- and C-terminal regions of the beta' subunit thereby facilitating its interaction with the beta and alpha subunits.</text>
</comment>
<comment type="catalytic activity">
    <reaction evidence="1">
        <text>RNA(n) + a ribonucleoside 5'-triphosphate = RNA(n+1) + diphosphate</text>
        <dbReference type="Rhea" id="RHEA:21248"/>
        <dbReference type="Rhea" id="RHEA-COMP:14527"/>
        <dbReference type="Rhea" id="RHEA-COMP:17342"/>
        <dbReference type="ChEBI" id="CHEBI:33019"/>
        <dbReference type="ChEBI" id="CHEBI:61557"/>
        <dbReference type="ChEBI" id="CHEBI:140395"/>
        <dbReference type="EC" id="2.7.7.6"/>
    </reaction>
</comment>
<comment type="subunit">
    <text evidence="1">The RNAP catalytic core consists of 2 alpha, 1 beta, 1 beta' and 1 omega subunit. When a sigma factor is associated with the core the holoenzyme is formed, which can initiate transcription.</text>
</comment>
<comment type="similarity">
    <text evidence="1">Belongs to the RNA polymerase subunit omega family.</text>
</comment>
<proteinExistence type="inferred from homology"/>
<keyword id="KW-0240">DNA-directed RNA polymerase</keyword>
<keyword id="KW-0548">Nucleotidyltransferase</keyword>
<keyword id="KW-0804">Transcription</keyword>
<keyword id="KW-0808">Transferase</keyword>
<reference key="1">
    <citation type="submission" date="2008-06" db="EMBL/GenBank/DDBJ databases">
        <title>Genome and proteome analysis of A. pleuropneumoniae serotype 7.</title>
        <authorList>
            <person name="Linke B."/>
            <person name="Buettner F."/>
            <person name="Martinez-Arias R."/>
            <person name="Goesmann A."/>
            <person name="Baltes N."/>
            <person name="Tegetmeyer H."/>
            <person name="Singh M."/>
            <person name="Gerlach G.F."/>
        </authorList>
    </citation>
    <scope>NUCLEOTIDE SEQUENCE [LARGE SCALE GENOMIC DNA]</scope>
    <source>
        <strain>AP76</strain>
    </source>
</reference>
<name>RPOZ_ACTP7</name>
<dbReference type="EC" id="2.7.7.6" evidence="1"/>
<dbReference type="EMBL" id="CP001091">
    <property type="protein sequence ID" value="ACE62564.1"/>
    <property type="molecule type" value="Genomic_DNA"/>
</dbReference>
<dbReference type="RefSeq" id="WP_005599441.1">
    <property type="nucleotide sequence ID" value="NC_010939.1"/>
</dbReference>
<dbReference type="SMR" id="B3GZ78"/>
<dbReference type="GeneID" id="48600121"/>
<dbReference type="KEGG" id="apa:APP7_1912"/>
<dbReference type="HOGENOM" id="CLU_125406_5_3_6"/>
<dbReference type="Proteomes" id="UP000001226">
    <property type="component" value="Chromosome"/>
</dbReference>
<dbReference type="GO" id="GO:0000428">
    <property type="term" value="C:DNA-directed RNA polymerase complex"/>
    <property type="evidence" value="ECO:0007669"/>
    <property type="project" value="UniProtKB-KW"/>
</dbReference>
<dbReference type="GO" id="GO:0003677">
    <property type="term" value="F:DNA binding"/>
    <property type="evidence" value="ECO:0007669"/>
    <property type="project" value="UniProtKB-UniRule"/>
</dbReference>
<dbReference type="GO" id="GO:0003899">
    <property type="term" value="F:DNA-directed RNA polymerase activity"/>
    <property type="evidence" value="ECO:0007669"/>
    <property type="project" value="UniProtKB-UniRule"/>
</dbReference>
<dbReference type="GO" id="GO:0006351">
    <property type="term" value="P:DNA-templated transcription"/>
    <property type="evidence" value="ECO:0007669"/>
    <property type="project" value="UniProtKB-UniRule"/>
</dbReference>
<dbReference type="Gene3D" id="3.90.940.10">
    <property type="match status" value="1"/>
</dbReference>
<dbReference type="HAMAP" id="MF_00366">
    <property type="entry name" value="RNApol_bact_RpoZ"/>
    <property type="match status" value="1"/>
</dbReference>
<dbReference type="InterPro" id="IPR003716">
    <property type="entry name" value="DNA-dir_RNA_pol_omega"/>
</dbReference>
<dbReference type="InterPro" id="IPR006110">
    <property type="entry name" value="Pol_omega/Rpo6/RPB6"/>
</dbReference>
<dbReference type="InterPro" id="IPR036161">
    <property type="entry name" value="RPB6/omega-like_sf"/>
</dbReference>
<dbReference type="NCBIfam" id="TIGR00690">
    <property type="entry name" value="rpoZ"/>
    <property type="match status" value="1"/>
</dbReference>
<dbReference type="PANTHER" id="PTHR34476">
    <property type="entry name" value="DNA-DIRECTED RNA POLYMERASE SUBUNIT OMEGA"/>
    <property type="match status" value="1"/>
</dbReference>
<dbReference type="PANTHER" id="PTHR34476:SF1">
    <property type="entry name" value="DNA-DIRECTED RNA POLYMERASE SUBUNIT OMEGA"/>
    <property type="match status" value="1"/>
</dbReference>
<dbReference type="Pfam" id="PF01192">
    <property type="entry name" value="RNA_pol_Rpb6"/>
    <property type="match status" value="1"/>
</dbReference>
<dbReference type="SMART" id="SM01409">
    <property type="entry name" value="RNA_pol_Rpb6"/>
    <property type="match status" value="1"/>
</dbReference>
<dbReference type="SUPFAM" id="SSF63562">
    <property type="entry name" value="RPB6/omega subunit-like"/>
    <property type="match status" value="1"/>
</dbReference>
<feature type="chain" id="PRO_1000121181" description="DNA-directed RNA polymerase subunit omega">
    <location>
        <begin position="1"/>
        <end position="93"/>
    </location>
</feature>
<protein>
    <recommendedName>
        <fullName evidence="1">DNA-directed RNA polymerase subunit omega</fullName>
        <shortName evidence="1">RNAP omega subunit</shortName>
        <ecNumber evidence="1">2.7.7.6</ecNumber>
    </recommendedName>
    <alternativeName>
        <fullName evidence="1">RNA polymerase omega subunit</fullName>
    </alternativeName>
    <alternativeName>
        <fullName evidence="1">Transcriptase subunit omega</fullName>
    </alternativeName>
</protein>
<sequence length="93" mass="10376">MARVTVQEAADKIGNRFDLILTAARRARQLQLHAREPLVPEENDKPTVIALREIEKGLINGQIMDQLENNDAIQQEVAEQEAISFLADVQANA</sequence>